<comment type="function">
    <text evidence="1">Catalyzes the formation of 4-diphosphocytidyl-2-C-methyl-D-erythritol from CTP and 2-C-methyl-D-erythritol 4-phosphate (MEP).</text>
</comment>
<comment type="catalytic activity">
    <reaction evidence="1">
        <text>2-C-methyl-D-erythritol 4-phosphate + CTP + H(+) = 4-CDP-2-C-methyl-D-erythritol + diphosphate</text>
        <dbReference type="Rhea" id="RHEA:13429"/>
        <dbReference type="ChEBI" id="CHEBI:15378"/>
        <dbReference type="ChEBI" id="CHEBI:33019"/>
        <dbReference type="ChEBI" id="CHEBI:37563"/>
        <dbReference type="ChEBI" id="CHEBI:57823"/>
        <dbReference type="ChEBI" id="CHEBI:58262"/>
        <dbReference type="EC" id="2.7.7.60"/>
    </reaction>
</comment>
<comment type="pathway">
    <text evidence="1">Isoprenoid biosynthesis; isopentenyl diphosphate biosynthesis via DXP pathway; isopentenyl diphosphate from 1-deoxy-D-xylulose 5-phosphate: step 2/6.</text>
</comment>
<comment type="similarity">
    <text evidence="1">Belongs to the IspD/TarI cytidylyltransferase family. IspD subfamily.</text>
</comment>
<name>ISPD_COREF</name>
<feature type="chain" id="PRO_0000075569" description="2-C-methyl-D-erythritol 4-phosphate cytidylyltransferase">
    <location>
        <begin position="1"/>
        <end position="248"/>
    </location>
</feature>
<feature type="site" description="Transition state stabilizer" evidence="1">
    <location>
        <position position="18"/>
    </location>
</feature>
<feature type="site" description="Transition state stabilizer" evidence="1">
    <location>
        <position position="25"/>
    </location>
</feature>
<feature type="site" description="Positions MEP for the nucleophilic attack" evidence="1">
    <location>
        <position position="162"/>
    </location>
</feature>
<feature type="site" description="Positions MEP for the nucleophilic attack" evidence="1">
    <location>
        <position position="221"/>
    </location>
</feature>
<dbReference type="EC" id="2.7.7.60" evidence="1"/>
<dbReference type="EMBL" id="BA000035">
    <property type="protein sequence ID" value="BAC19331.1"/>
    <property type="molecule type" value="Genomic_DNA"/>
</dbReference>
<dbReference type="RefSeq" id="WP_006769120.1">
    <property type="nucleotide sequence ID" value="NC_004369.1"/>
</dbReference>
<dbReference type="SMR" id="Q8FMI3"/>
<dbReference type="STRING" id="196164.gene:10742968"/>
<dbReference type="KEGG" id="cef:CE2521"/>
<dbReference type="eggNOG" id="COG1211">
    <property type="taxonomic scope" value="Bacteria"/>
</dbReference>
<dbReference type="HOGENOM" id="CLU_061281_1_1_11"/>
<dbReference type="OrthoDB" id="9802561at2"/>
<dbReference type="UniPathway" id="UPA00056">
    <property type="reaction ID" value="UER00093"/>
</dbReference>
<dbReference type="Proteomes" id="UP000001409">
    <property type="component" value="Chromosome"/>
</dbReference>
<dbReference type="GO" id="GO:0050518">
    <property type="term" value="F:2-C-methyl-D-erythritol 4-phosphate cytidylyltransferase activity"/>
    <property type="evidence" value="ECO:0007669"/>
    <property type="project" value="UniProtKB-UniRule"/>
</dbReference>
<dbReference type="GO" id="GO:0019288">
    <property type="term" value="P:isopentenyl diphosphate biosynthetic process, methylerythritol 4-phosphate pathway"/>
    <property type="evidence" value="ECO:0007669"/>
    <property type="project" value="UniProtKB-UniRule"/>
</dbReference>
<dbReference type="CDD" id="cd02516">
    <property type="entry name" value="CDP-ME_synthetase"/>
    <property type="match status" value="1"/>
</dbReference>
<dbReference type="FunFam" id="3.90.550.10:FF:000003">
    <property type="entry name" value="2-C-methyl-D-erythritol 4-phosphate cytidylyltransferase"/>
    <property type="match status" value="1"/>
</dbReference>
<dbReference type="Gene3D" id="3.90.550.10">
    <property type="entry name" value="Spore Coat Polysaccharide Biosynthesis Protein SpsA, Chain A"/>
    <property type="match status" value="1"/>
</dbReference>
<dbReference type="HAMAP" id="MF_00108">
    <property type="entry name" value="IspD"/>
    <property type="match status" value="1"/>
</dbReference>
<dbReference type="InterPro" id="IPR001228">
    <property type="entry name" value="IspD"/>
</dbReference>
<dbReference type="InterPro" id="IPR034683">
    <property type="entry name" value="IspD/TarI"/>
</dbReference>
<dbReference type="InterPro" id="IPR050088">
    <property type="entry name" value="IspD/TarI_cytidylyltransf_bact"/>
</dbReference>
<dbReference type="InterPro" id="IPR018294">
    <property type="entry name" value="ISPD_synthase_CS"/>
</dbReference>
<dbReference type="InterPro" id="IPR029044">
    <property type="entry name" value="Nucleotide-diphossugar_trans"/>
</dbReference>
<dbReference type="NCBIfam" id="TIGR00453">
    <property type="entry name" value="ispD"/>
    <property type="match status" value="1"/>
</dbReference>
<dbReference type="PANTHER" id="PTHR32125">
    <property type="entry name" value="2-C-METHYL-D-ERYTHRITOL 4-PHOSPHATE CYTIDYLYLTRANSFERASE, CHLOROPLASTIC"/>
    <property type="match status" value="1"/>
</dbReference>
<dbReference type="PANTHER" id="PTHR32125:SF4">
    <property type="entry name" value="2-C-METHYL-D-ERYTHRITOL 4-PHOSPHATE CYTIDYLYLTRANSFERASE, CHLOROPLASTIC"/>
    <property type="match status" value="1"/>
</dbReference>
<dbReference type="Pfam" id="PF01128">
    <property type="entry name" value="IspD"/>
    <property type="match status" value="1"/>
</dbReference>
<dbReference type="SUPFAM" id="SSF53448">
    <property type="entry name" value="Nucleotide-diphospho-sugar transferases"/>
    <property type="match status" value="1"/>
</dbReference>
<dbReference type="PROSITE" id="PS01295">
    <property type="entry name" value="ISPD"/>
    <property type="match status" value="1"/>
</dbReference>
<protein>
    <recommendedName>
        <fullName evidence="1">2-C-methyl-D-erythritol 4-phosphate cytidylyltransferase</fullName>
        <ecNumber evidence="1">2.7.7.60</ecNumber>
    </recommendedName>
    <alternativeName>
        <fullName evidence="1">4-diphosphocytidyl-2C-methyl-D-erythritol synthase</fullName>
    </alternativeName>
    <alternativeName>
        <fullName evidence="1">MEP cytidylyltransferase</fullName>
        <shortName evidence="1">MCT</shortName>
    </alternativeName>
</protein>
<accession>Q8FMI3</accession>
<sequence length="248" mass="26727">MSRLPVVALLAAAGRGTRLGGPIPKAFVTLRGRSLVERSLRAMLTSEVVDEVIILVSPDMEDYARELLTRRGLLNDPEGVRVRLVHGGGERADSVWAGLQAIDHDDAIVLIHDSARALTPPGMIARVARMVADGAPAVIPVVPVADTIKRVDGSTVVDTPNRADLRAVQTPQGFLLSRLRAANEKFFATPDPGFIPTDDASLMEWYGVEVTCVQGDPMAFKVTTPIDMMLAQRITDEAEPTIFEVPGD</sequence>
<keyword id="KW-0414">Isoprene biosynthesis</keyword>
<keyword id="KW-0548">Nucleotidyltransferase</keyword>
<keyword id="KW-1185">Reference proteome</keyword>
<keyword id="KW-0808">Transferase</keyword>
<reference key="1">
    <citation type="journal article" date="2003" name="Genome Res.">
        <title>Comparative complete genome sequence analysis of the amino acid replacements responsible for the thermostability of Corynebacterium efficiens.</title>
        <authorList>
            <person name="Nishio Y."/>
            <person name="Nakamura Y."/>
            <person name="Kawarabayasi Y."/>
            <person name="Usuda Y."/>
            <person name="Kimura E."/>
            <person name="Sugimoto S."/>
            <person name="Matsui K."/>
            <person name="Yamagishi A."/>
            <person name="Kikuchi H."/>
            <person name="Ikeo K."/>
            <person name="Gojobori T."/>
        </authorList>
    </citation>
    <scope>NUCLEOTIDE SEQUENCE [LARGE SCALE GENOMIC DNA]</scope>
    <source>
        <strain>DSM 44549 / YS-314 / AJ 12310 / JCM 11189 / NBRC 100395</strain>
    </source>
</reference>
<proteinExistence type="inferred from homology"/>
<gene>
    <name evidence="1" type="primary">ispD</name>
    <name type="ordered locus">CE2521</name>
</gene>
<organism>
    <name type="scientific">Corynebacterium efficiens (strain DSM 44549 / YS-314 / AJ 12310 / JCM 11189 / NBRC 100395)</name>
    <dbReference type="NCBI Taxonomy" id="196164"/>
    <lineage>
        <taxon>Bacteria</taxon>
        <taxon>Bacillati</taxon>
        <taxon>Actinomycetota</taxon>
        <taxon>Actinomycetes</taxon>
        <taxon>Mycobacteriales</taxon>
        <taxon>Corynebacteriaceae</taxon>
        <taxon>Corynebacterium</taxon>
    </lineage>
</organism>
<evidence type="ECO:0000255" key="1">
    <source>
        <dbReference type="HAMAP-Rule" id="MF_00108"/>
    </source>
</evidence>